<accession>Q8BM72</accession>
<accession>Q3TII6</accession>
<accession>Q9D1X5</accession>
<gene>
    <name type="primary">Hspa13</name>
    <name type="synonym">Stch</name>
</gene>
<comment type="function">
    <text evidence="1">Has peptide-independent ATPase activity.</text>
</comment>
<comment type="subunit">
    <text evidence="1">Binds UBQLN2.</text>
</comment>
<comment type="subcellular location">
    <subcellularLocation>
        <location evidence="1">Microsome</location>
    </subcellularLocation>
    <subcellularLocation>
        <location evidence="1">Endoplasmic reticulum</location>
    </subcellularLocation>
</comment>
<comment type="alternative products">
    <event type="alternative splicing"/>
    <isoform>
        <id>Q8BM72-1</id>
        <name>1</name>
        <sequence type="displayed"/>
    </isoform>
    <isoform>
        <id>Q8BM72-2</id>
        <name>2</name>
        <sequence type="described" ref="VSP_013912 VSP_013913"/>
    </isoform>
</comment>
<comment type="similarity">
    <text evidence="5">Belongs to the heat shock protein 70 family.</text>
</comment>
<comment type="sequence caution" evidence="5">
    <conflict type="erroneous initiation">
        <sequence resource="EMBL-CDS" id="BAE39860"/>
    </conflict>
</comment>
<reference key="1">
    <citation type="journal article" date="2005" name="Science">
        <title>The transcriptional landscape of the mammalian genome.</title>
        <authorList>
            <person name="Carninci P."/>
            <person name="Kasukawa T."/>
            <person name="Katayama S."/>
            <person name="Gough J."/>
            <person name="Frith M.C."/>
            <person name="Maeda N."/>
            <person name="Oyama R."/>
            <person name="Ravasi T."/>
            <person name="Lenhard B."/>
            <person name="Wells C."/>
            <person name="Kodzius R."/>
            <person name="Shimokawa K."/>
            <person name="Bajic V.B."/>
            <person name="Brenner S.E."/>
            <person name="Batalov S."/>
            <person name="Forrest A.R."/>
            <person name="Zavolan M."/>
            <person name="Davis M.J."/>
            <person name="Wilming L.G."/>
            <person name="Aidinis V."/>
            <person name="Allen J.E."/>
            <person name="Ambesi-Impiombato A."/>
            <person name="Apweiler R."/>
            <person name="Aturaliya R.N."/>
            <person name="Bailey T.L."/>
            <person name="Bansal M."/>
            <person name="Baxter L."/>
            <person name="Beisel K.W."/>
            <person name="Bersano T."/>
            <person name="Bono H."/>
            <person name="Chalk A.M."/>
            <person name="Chiu K.P."/>
            <person name="Choudhary V."/>
            <person name="Christoffels A."/>
            <person name="Clutterbuck D.R."/>
            <person name="Crowe M.L."/>
            <person name="Dalla E."/>
            <person name="Dalrymple B.P."/>
            <person name="de Bono B."/>
            <person name="Della Gatta G."/>
            <person name="di Bernardo D."/>
            <person name="Down T."/>
            <person name="Engstrom P."/>
            <person name="Fagiolini M."/>
            <person name="Faulkner G."/>
            <person name="Fletcher C.F."/>
            <person name="Fukushima T."/>
            <person name="Furuno M."/>
            <person name="Futaki S."/>
            <person name="Gariboldi M."/>
            <person name="Georgii-Hemming P."/>
            <person name="Gingeras T.R."/>
            <person name="Gojobori T."/>
            <person name="Green R.E."/>
            <person name="Gustincich S."/>
            <person name="Harbers M."/>
            <person name="Hayashi Y."/>
            <person name="Hensch T.K."/>
            <person name="Hirokawa N."/>
            <person name="Hill D."/>
            <person name="Huminiecki L."/>
            <person name="Iacono M."/>
            <person name="Ikeo K."/>
            <person name="Iwama A."/>
            <person name="Ishikawa T."/>
            <person name="Jakt M."/>
            <person name="Kanapin A."/>
            <person name="Katoh M."/>
            <person name="Kawasawa Y."/>
            <person name="Kelso J."/>
            <person name="Kitamura H."/>
            <person name="Kitano H."/>
            <person name="Kollias G."/>
            <person name="Krishnan S.P."/>
            <person name="Kruger A."/>
            <person name="Kummerfeld S.K."/>
            <person name="Kurochkin I.V."/>
            <person name="Lareau L.F."/>
            <person name="Lazarevic D."/>
            <person name="Lipovich L."/>
            <person name="Liu J."/>
            <person name="Liuni S."/>
            <person name="McWilliam S."/>
            <person name="Madan Babu M."/>
            <person name="Madera M."/>
            <person name="Marchionni L."/>
            <person name="Matsuda H."/>
            <person name="Matsuzawa S."/>
            <person name="Miki H."/>
            <person name="Mignone F."/>
            <person name="Miyake S."/>
            <person name="Morris K."/>
            <person name="Mottagui-Tabar S."/>
            <person name="Mulder N."/>
            <person name="Nakano N."/>
            <person name="Nakauchi H."/>
            <person name="Ng P."/>
            <person name="Nilsson R."/>
            <person name="Nishiguchi S."/>
            <person name="Nishikawa S."/>
            <person name="Nori F."/>
            <person name="Ohara O."/>
            <person name="Okazaki Y."/>
            <person name="Orlando V."/>
            <person name="Pang K.C."/>
            <person name="Pavan W.J."/>
            <person name="Pavesi G."/>
            <person name="Pesole G."/>
            <person name="Petrovsky N."/>
            <person name="Piazza S."/>
            <person name="Reed J."/>
            <person name="Reid J.F."/>
            <person name="Ring B.Z."/>
            <person name="Ringwald M."/>
            <person name="Rost B."/>
            <person name="Ruan Y."/>
            <person name="Salzberg S.L."/>
            <person name="Sandelin A."/>
            <person name="Schneider C."/>
            <person name="Schoenbach C."/>
            <person name="Sekiguchi K."/>
            <person name="Semple C.A."/>
            <person name="Seno S."/>
            <person name="Sessa L."/>
            <person name="Sheng Y."/>
            <person name="Shibata Y."/>
            <person name="Shimada H."/>
            <person name="Shimada K."/>
            <person name="Silva D."/>
            <person name="Sinclair B."/>
            <person name="Sperling S."/>
            <person name="Stupka E."/>
            <person name="Sugiura K."/>
            <person name="Sultana R."/>
            <person name="Takenaka Y."/>
            <person name="Taki K."/>
            <person name="Tammoja K."/>
            <person name="Tan S.L."/>
            <person name="Tang S."/>
            <person name="Taylor M.S."/>
            <person name="Tegner J."/>
            <person name="Teichmann S.A."/>
            <person name="Ueda H.R."/>
            <person name="van Nimwegen E."/>
            <person name="Verardo R."/>
            <person name="Wei C.L."/>
            <person name="Yagi K."/>
            <person name="Yamanishi H."/>
            <person name="Zabarovsky E."/>
            <person name="Zhu S."/>
            <person name="Zimmer A."/>
            <person name="Hide W."/>
            <person name="Bult C."/>
            <person name="Grimmond S.M."/>
            <person name="Teasdale R.D."/>
            <person name="Liu E.T."/>
            <person name="Brusic V."/>
            <person name="Quackenbush J."/>
            <person name="Wahlestedt C."/>
            <person name="Mattick J.S."/>
            <person name="Hume D.A."/>
            <person name="Kai C."/>
            <person name="Sasaki D."/>
            <person name="Tomaru Y."/>
            <person name="Fukuda S."/>
            <person name="Kanamori-Katayama M."/>
            <person name="Suzuki M."/>
            <person name="Aoki J."/>
            <person name="Arakawa T."/>
            <person name="Iida J."/>
            <person name="Imamura K."/>
            <person name="Itoh M."/>
            <person name="Kato T."/>
            <person name="Kawaji H."/>
            <person name="Kawagashira N."/>
            <person name="Kawashima T."/>
            <person name="Kojima M."/>
            <person name="Kondo S."/>
            <person name="Konno H."/>
            <person name="Nakano K."/>
            <person name="Ninomiya N."/>
            <person name="Nishio T."/>
            <person name="Okada M."/>
            <person name="Plessy C."/>
            <person name="Shibata K."/>
            <person name="Shiraki T."/>
            <person name="Suzuki S."/>
            <person name="Tagami M."/>
            <person name="Waki K."/>
            <person name="Watahiki A."/>
            <person name="Okamura-Oho Y."/>
            <person name="Suzuki H."/>
            <person name="Kawai J."/>
            <person name="Hayashizaki Y."/>
        </authorList>
    </citation>
    <scope>NUCLEOTIDE SEQUENCE [LARGE SCALE MRNA] (ISOFORM 1)</scope>
    <source>
        <strain>BALB/cJ</strain>
        <strain>C57BL/6J</strain>
        <tissue>Corpora quadrigemina</tissue>
        <tissue>Embryo</tissue>
    </source>
</reference>
<reference key="2">
    <citation type="journal article" date="2004" name="Genome Res.">
        <title>The status, quality, and expansion of the NIH full-length cDNA project: the Mammalian Gene Collection (MGC).</title>
        <authorList>
            <consortium name="The MGC Project Team"/>
        </authorList>
    </citation>
    <scope>NUCLEOTIDE SEQUENCE [LARGE SCALE MRNA] (ISOFORM 2)</scope>
    <source>
        <strain>C57BL/6J</strain>
        <tissue>Head</tissue>
    </source>
</reference>
<reference key="3">
    <citation type="journal article" date="2010" name="Cell">
        <title>A tissue-specific atlas of mouse protein phosphorylation and expression.</title>
        <authorList>
            <person name="Huttlin E.L."/>
            <person name="Jedrychowski M.P."/>
            <person name="Elias J.E."/>
            <person name="Goswami T."/>
            <person name="Rad R."/>
            <person name="Beausoleil S.A."/>
            <person name="Villen J."/>
            <person name="Haas W."/>
            <person name="Sowa M.E."/>
            <person name="Gygi S.P."/>
        </authorList>
    </citation>
    <scope>IDENTIFICATION BY MASS SPECTROMETRY [LARGE SCALE ANALYSIS]</scope>
    <source>
        <tissue>Lung</tissue>
        <tissue>Pancreas</tissue>
        <tissue>Spleen</tissue>
    </source>
</reference>
<dbReference type="EMBL" id="AK021006">
    <property type="protein sequence ID" value="BAB32274.1"/>
    <property type="molecule type" value="mRNA"/>
</dbReference>
<dbReference type="EMBL" id="AK034643">
    <property type="protein sequence ID" value="BAC28781.1"/>
    <property type="molecule type" value="mRNA"/>
</dbReference>
<dbReference type="EMBL" id="AK167839">
    <property type="protein sequence ID" value="BAE39860.1"/>
    <property type="status" value="ALT_INIT"/>
    <property type="molecule type" value="mRNA"/>
</dbReference>
<dbReference type="EMBL" id="BC085181">
    <property type="protein sequence ID" value="AAH85181.1"/>
    <property type="molecule type" value="mRNA"/>
</dbReference>
<dbReference type="CCDS" id="CCDS28273.1">
    <molecule id="Q8BM72-1"/>
</dbReference>
<dbReference type="RefSeq" id="NP_084477.1">
    <molecule id="Q8BM72-1"/>
    <property type="nucleotide sequence ID" value="NM_030201.3"/>
</dbReference>
<dbReference type="SMR" id="Q8BM72"/>
<dbReference type="BioGRID" id="226017">
    <property type="interactions" value="9"/>
</dbReference>
<dbReference type="FunCoup" id="Q8BM72">
    <property type="interactions" value="3681"/>
</dbReference>
<dbReference type="STRING" id="10090.ENSMUSP00000048817"/>
<dbReference type="GlyConnect" id="2366">
    <property type="glycosylation" value="4 N-Linked glycans (1 site)"/>
</dbReference>
<dbReference type="GlyCosmos" id="Q8BM72">
    <property type="glycosylation" value="1 site, 4 glycans"/>
</dbReference>
<dbReference type="GlyGen" id="Q8BM72">
    <property type="glycosylation" value="3 sites, 6 N-linked glycans (3 sites)"/>
</dbReference>
<dbReference type="iPTMnet" id="Q8BM72"/>
<dbReference type="PhosphoSitePlus" id="Q8BM72"/>
<dbReference type="SwissPalm" id="Q8BM72"/>
<dbReference type="jPOST" id="Q8BM72"/>
<dbReference type="PaxDb" id="10090-ENSMUSP00000048817"/>
<dbReference type="PeptideAtlas" id="Q8BM72"/>
<dbReference type="ProteomicsDB" id="273191">
    <molecule id="Q8BM72-1"/>
</dbReference>
<dbReference type="ProteomicsDB" id="273192">
    <molecule id="Q8BM72-2"/>
</dbReference>
<dbReference type="Pumba" id="Q8BM72"/>
<dbReference type="Antibodypedia" id="2522">
    <property type="antibodies" value="192 antibodies from 29 providers"/>
</dbReference>
<dbReference type="DNASU" id="110920"/>
<dbReference type="Ensembl" id="ENSMUST00000046283.16">
    <molecule id="Q8BM72-1"/>
    <property type="protein sequence ID" value="ENSMUSP00000048817.9"/>
    <property type="gene ID" value="ENSMUSG00000032932.16"/>
</dbReference>
<dbReference type="GeneID" id="110920"/>
<dbReference type="KEGG" id="mmu:110920"/>
<dbReference type="UCSC" id="uc007zrp.2">
    <molecule id="Q8BM72-1"/>
    <property type="organism name" value="mouse"/>
</dbReference>
<dbReference type="UCSC" id="uc007zrr.2">
    <molecule id="Q8BM72-2"/>
    <property type="organism name" value="mouse"/>
</dbReference>
<dbReference type="AGR" id="MGI:1309463"/>
<dbReference type="CTD" id="6782"/>
<dbReference type="MGI" id="MGI:1309463">
    <property type="gene designation" value="Hspa13"/>
</dbReference>
<dbReference type="VEuPathDB" id="HostDB:ENSMUSG00000032932"/>
<dbReference type="eggNOG" id="KOG0101">
    <property type="taxonomic scope" value="Eukaryota"/>
</dbReference>
<dbReference type="GeneTree" id="ENSGT00890000139503"/>
<dbReference type="HOGENOM" id="CLU_005965_0_3_1"/>
<dbReference type="InParanoid" id="Q8BM72"/>
<dbReference type="OMA" id="GGMFITR"/>
<dbReference type="OrthoDB" id="2401965at2759"/>
<dbReference type="PhylomeDB" id="Q8BM72"/>
<dbReference type="TreeFam" id="TF105047"/>
<dbReference type="Reactome" id="R-MMU-3371453">
    <property type="pathway name" value="Regulation of HSF1-mediated heat shock response"/>
</dbReference>
<dbReference type="BioGRID-ORCS" id="110920">
    <property type="hits" value="10 hits in 78 CRISPR screens"/>
</dbReference>
<dbReference type="ChiTaRS" id="Hspa13">
    <property type="organism name" value="mouse"/>
</dbReference>
<dbReference type="PRO" id="PR:Q8BM72"/>
<dbReference type="Proteomes" id="UP000000589">
    <property type="component" value="Chromosome 16"/>
</dbReference>
<dbReference type="RNAct" id="Q8BM72">
    <property type="molecule type" value="protein"/>
</dbReference>
<dbReference type="Bgee" id="ENSMUSG00000032932">
    <property type="expression patterns" value="Expressed in manus and 231 other cell types or tissues"/>
</dbReference>
<dbReference type="ExpressionAtlas" id="Q8BM72">
    <property type="expression patterns" value="baseline and differential"/>
</dbReference>
<dbReference type="GO" id="GO:0005783">
    <property type="term" value="C:endoplasmic reticulum"/>
    <property type="evidence" value="ECO:0007669"/>
    <property type="project" value="UniProtKB-SubCell"/>
</dbReference>
<dbReference type="GO" id="GO:0005524">
    <property type="term" value="F:ATP binding"/>
    <property type="evidence" value="ECO:0007669"/>
    <property type="project" value="UniProtKB-KW"/>
</dbReference>
<dbReference type="GO" id="GO:0140662">
    <property type="term" value="F:ATP-dependent protein folding chaperone"/>
    <property type="evidence" value="ECO:0007669"/>
    <property type="project" value="InterPro"/>
</dbReference>
<dbReference type="CDD" id="cd10237">
    <property type="entry name" value="ASKHA_NBD_HSP70_HSPA13"/>
    <property type="match status" value="1"/>
</dbReference>
<dbReference type="FunFam" id="3.30.420.40:FF:000099">
    <property type="entry name" value="Heat shock 70 kDa protein 13"/>
    <property type="match status" value="1"/>
</dbReference>
<dbReference type="FunFam" id="3.30.420.40:FF:000103">
    <property type="entry name" value="Heat shock 70 kDa protein 13"/>
    <property type="match status" value="1"/>
</dbReference>
<dbReference type="FunFam" id="3.90.640.10:FF:000032">
    <property type="entry name" value="heat shock 70 kDa protein 13"/>
    <property type="match status" value="1"/>
</dbReference>
<dbReference type="FunFam" id="3.30.420.40:FF:000110">
    <property type="entry name" value="heat shock 70 kDa protein 13 isoform X1"/>
    <property type="match status" value="1"/>
</dbReference>
<dbReference type="Gene3D" id="3.30.30.30">
    <property type="match status" value="1"/>
</dbReference>
<dbReference type="Gene3D" id="3.30.420.40">
    <property type="match status" value="4"/>
</dbReference>
<dbReference type="Gene3D" id="3.90.640.10">
    <property type="entry name" value="Actin, Chain A, domain 4"/>
    <property type="match status" value="2"/>
</dbReference>
<dbReference type="InterPro" id="IPR043129">
    <property type="entry name" value="ATPase_NBD"/>
</dbReference>
<dbReference type="InterPro" id="IPR018181">
    <property type="entry name" value="Heat_shock_70_CS"/>
</dbReference>
<dbReference type="InterPro" id="IPR013126">
    <property type="entry name" value="Hsp_70_fam"/>
</dbReference>
<dbReference type="InterPro" id="IPR042048">
    <property type="entry name" value="HSPA13"/>
</dbReference>
<dbReference type="PANTHER" id="PTHR19375">
    <property type="entry name" value="HEAT SHOCK PROTEIN 70KDA"/>
    <property type="match status" value="1"/>
</dbReference>
<dbReference type="Pfam" id="PF00012">
    <property type="entry name" value="HSP70"/>
    <property type="match status" value="2"/>
</dbReference>
<dbReference type="PRINTS" id="PR00301">
    <property type="entry name" value="HEATSHOCK70"/>
</dbReference>
<dbReference type="SUPFAM" id="SSF53067">
    <property type="entry name" value="Actin-like ATPase domain"/>
    <property type="match status" value="2"/>
</dbReference>
<dbReference type="PROSITE" id="PS00297">
    <property type="entry name" value="HSP70_1"/>
    <property type="match status" value="1"/>
</dbReference>
<dbReference type="PROSITE" id="PS00329">
    <property type="entry name" value="HSP70_2"/>
    <property type="match status" value="1"/>
</dbReference>
<dbReference type="PROSITE" id="PS01036">
    <property type="entry name" value="HSP70_3"/>
    <property type="match status" value="1"/>
</dbReference>
<sequence length="471" mass="51709">MAGEMTILGSAVLTLLLAGYLAQQYLPLPTPKVIGIDLGTTYCSVGVFFPGTGKVKVIPDENGHISIPSMVSFTDGDVYVGYESLELADSNPQNTIYDAKRFIGKIFTPEELEAEVGRYPFKVLHRNGMAEFSVTSNETIIVSPEFVGSRLLLKLKEMAEEYLGMPVANAVISVPAEFDLQQRNSTIQAANLAGLKILRVINEPTAAAMAYGLHKVDVFYVLVIDLGGGTLDVSLLNKQGGMFLTRAMSGNNKLGGQDFNQRLLQHLYKEIYQTYGFLPSRKEEIHRLRQAVEMVKLNLTIHQSAQVSVLLTVEGKDSKEPQNGDSELPKDQLTPGDGHHVNRVFRPGLSESKSGKSQVLFETEVSRKLFDALNEDLFQKILVPIQQVLKEGLLDKTEIDEVVLVGGSTRIPRIRQVIQEFFGKDPNTSVDPDLAVVTGVAIQAGIDGGSWPLQVSALEIPNKHLQKTNFN</sequence>
<evidence type="ECO:0000250" key="1"/>
<evidence type="ECO:0000255" key="2"/>
<evidence type="ECO:0000256" key="3">
    <source>
        <dbReference type="SAM" id="MobiDB-lite"/>
    </source>
</evidence>
<evidence type="ECO:0000303" key="4">
    <source>
    </source>
</evidence>
<evidence type="ECO:0000305" key="5"/>
<protein>
    <recommendedName>
        <fullName>Heat shock 70 kDa protein 13</fullName>
    </recommendedName>
    <alternativeName>
        <fullName>Microsomal stress-70 protein ATPase core</fullName>
    </alternativeName>
    <alternativeName>
        <fullName>Stress-70 protein chaperone microsome-associated 60 kDa protein</fullName>
    </alternativeName>
</protein>
<keyword id="KW-0025">Alternative splicing</keyword>
<keyword id="KW-0067">ATP-binding</keyword>
<keyword id="KW-0256">Endoplasmic reticulum</keyword>
<keyword id="KW-0492">Microsome</keyword>
<keyword id="KW-0547">Nucleotide-binding</keyword>
<keyword id="KW-1185">Reference proteome</keyword>
<keyword id="KW-0732">Signal</keyword>
<organism>
    <name type="scientific">Mus musculus</name>
    <name type="common">Mouse</name>
    <dbReference type="NCBI Taxonomy" id="10090"/>
    <lineage>
        <taxon>Eukaryota</taxon>
        <taxon>Metazoa</taxon>
        <taxon>Chordata</taxon>
        <taxon>Craniata</taxon>
        <taxon>Vertebrata</taxon>
        <taxon>Euteleostomi</taxon>
        <taxon>Mammalia</taxon>
        <taxon>Eutheria</taxon>
        <taxon>Euarchontoglires</taxon>
        <taxon>Glires</taxon>
        <taxon>Rodentia</taxon>
        <taxon>Myomorpha</taxon>
        <taxon>Muroidea</taxon>
        <taxon>Muridae</taxon>
        <taxon>Murinae</taxon>
        <taxon>Mus</taxon>
        <taxon>Mus</taxon>
    </lineage>
</organism>
<feature type="signal peptide" evidence="2">
    <location>
        <begin position="1"/>
        <end position="22"/>
    </location>
</feature>
<feature type="chain" id="PRO_0000013559" description="Heat shock 70 kDa protein 13">
    <location>
        <begin position="23"/>
        <end position="471"/>
    </location>
</feature>
<feature type="region of interest" description="Disordered" evidence="3">
    <location>
        <begin position="317"/>
        <end position="350"/>
    </location>
</feature>
<feature type="compositionally biased region" description="Basic and acidic residues" evidence="3">
    <location>
        <begin position="317"/>
        <end position="330"/>
    </location>
</feature>
<feature type="splice variant" id="VSP_013912" description="In isoform 2." evidence="4">
    <original>LKILR</original>
    <variation>NSTFD</variation>
    <location>
        <begin position="195"/>
        <end position="199"/>
    </location>
</feature>
<feature type="splice variant" id="VSP_013913" description="In isoform 2." evidence="4">
    <location>
        <begin position="200"/>
        <end position="471"/>
    </location>
</feature>
<feature type="sequence conflict" description="In Ref. 1; BAE39860." evidence="5" ref="1">
    <original>M</original>
    <variation>V</variation>
    <location>
        <position position="1"/>
    </location>
</feature>
<name>HSP13_MOUSE</name>
<proteinExistence type="evidence at protein level"/>